<organism>
    <name type="scientific">Bacillus cereus</name>
    <dbReference type="NCBI Taxonomy" id="1396"/>
    <lineage>
        <taxon>Bacteria</taxon>
        <taxon>Bacillati</taxon>
        <taxon>Bacillota</taxon>
        <taxon>Bacilli</taxon>
        <taxon>Bacillales</taxon>
        <taxon>Bacillaceae</taxon>
        <taxon>Bacillus</taxon>
        <taxon>Bacillus cereus group</taxon>
    </lineage>
</organism>
<accession>P83072</accession>
<keyword id="KW-0903">Direct protein sequencing</keyword>
<feature type="chain" id="PRO_0000270968" description="26 kDa protein">
    <location>
        <begin position="1"/>
        <end position="20" status="greater than"/>
    </location>
</feature>
<feature type="non-terminal residue" evidence="2">
    <location>
        <position position="20"/>
    </location>
</feature>
<protein>
    <recommendedName>
        <fullName>26 kDa protein</fullName>
    </recommendedName>
</protein>
<name>26KD_BACCE</name>
<evidence type="ECO:0000269" key="1">
    <source>
    </source>
</evidence>
<evidence type="ECO:0000303" key="2">
    <source>
    </source>
</evidence>
<evidence type="ECO:0000305" key="3"/>
<reference evidence="3" key="1">
    <citation type="journal article" date="2002" name="J. Appl. Microbiol.">
        <title>Acid stress in the food pathogen Bacillus cereus.</title>
        <authorList>
            <person name="Browne N."/>
            <person name="Dowds B.C.A."/>
        </authorList>
    </citation>
    <scope>PROTEIN SEQUENCE</scope>
    <scope>INDUCTION</scope>
    <source>
        <strain evidence="1">DSM 626 / NCIMB 11796 / T</strain>
    </source>
</reference>
<comment type="induction">
    <text evidence="1">Under acid-stress, this protein is expressed at a higher level in wild-type B.cereus than in the acid-sensitive mutant strain NB1.</text>
</comment>
<proteinExistence type="evidence at protein level"/>
<sequence length="20" mass="2176">MKLIAKTRILNTLVFSAAGK</sequence>